<feature type="chain" id="PRO_1000101284" description="Glycine--tRNA ligase beta subunit">
    <location>
        <begin position="1"/>
        <end position="701"/>
    </location>
</feature>
<comment type="catalytic activity">
    <reaction evidence="1">
        <text>tRNA(Gly) + glycine + ATP = glycyl-tRNA(Gly) + AMP + diphosphate</text>
        <dbReference type="Rhea" id="RHEA:16013"/>
        <dbReference type="Rhea" id="RHEA-COMP:9664"/>
        <dbReference type="Rhea" id="RHEA-COMP:9683"/>
        <dbReference type="ChEBI" id="CHEBI:30616"/>
        <dbReference type="ChEBI" id="CHEBI:33019"/>
        <dbReference type="ChEBI" id="CHEBI:57305"/>
        <dbReference type="ChEBI" id="CHEBI:78442"/>
        <dbReference type="ChEBI" id="CHEBI:78522"/>
        <dbReference type="ChEBI" id="CHEBI:456215"/>
        <dbReference type="EC" id="6.1.1.14"/>
    </reaction>
</comment>
<comment type="subunit">
    <text evidence="1">Tetramer of two alpha and two beta subunits.</text>
</comment>
<comment type="subcellular location">
    <subcellularLocation>
        <location evidence="1">Cytoplasm</location>
    </subcellularLocation>
</comment>
<comment type="similarity">
    <text evidence="1">Belongs to the class-II aminoacyl-tRNA synthetase family.</text>
</comment>
<dbReference type="EC" id="6.1.1.14" evidence="1"/>
<dbReference type="EMBL" id="CP001173">
    <property type="protein sequence ID" value="ACI27673.1"/>
    <property type="molecule type" value="Genomic_DNA"/>
</dbReference>
<dbReference type="RefSeq" id="WP_000555189.1">
    <property type="nucleotide sequence ID" value="NC_011333.1"/>
</dbReference>
<dbReference type="SMR" id="B5Z7X4"/>
<dbReference type="KEGG" id="hpg:HPG27_919"/>
<dbReference type="HOGENOM" id="CLU_007220_2_2_7"/>
<dbReference type="Proteomes" id="UP000001735">
    <property type="component" value="Chromosome"/>
</dbReference>
<dbReference type="GO" id="GO:0005829">
    <property type="term" value="C:cytosol"/>
    <property type="evidence" value="ECO:0007669"/>
    <property type="project" value="TreeGrafter"/>
</dbReference>
<dbReference type="GO" id="GO:0005524">
    <property type="term" value="F:ATP binding"/>
    <property type="evidence" value="ECO:0007669"/>
    <property type="project" value="UniProtKB-UniRule"/>
</dbReference>
<dbReference type="GO" id="GO:0004820">
    <property type="term" value="F:glycine-tRNA ligase activity"/>
    <property type="evidence" value="ECO:0007669"/>
    <property type="project" value="UniProtKB-UniRule"/>
</dbReference>
<dbReference type="GO" id="GO:0006426">
    <property type="term" value="P:glycyl-tRNA aminoacylation"/>
    <property type="evidence" value="ECO:0007669"/>
    <property type="project" value="UniProtKB-UniRule"/>
</dbReference>
<dbReference type="HAMAP" id="MF_00255">
    <property type="entry name" value="Gly_tRNA_synth_beta"/>
    <property type="match status" value="1"/>
</dbReference>
<dbReference type="InterPro" id="IPR015944">
    <property type="entry name" value="Gly-tRNA-synth_bsu"/>
</dbReference>
<dbReference type="InterPro" id="IPR006194">
    <property type="entry name" value="Gly-tRNA-synth_heterodimer"/>
</dbReference>
<dbReference type="NCBIfam" id="TIGR00211">
    <property type="entry name" value="glyS"/>
    <property type="match status" value="1"/>
</dbReference>
<dbReference type="PANTHER" id="PTHR30075:SF2">
    <property type="entry name" value="GLYCINE--TRNA LIGASE, CHLOROPLASTIC_MITOCHONDRIAL 2"/>
    <property type="match status" value="1"/>
</dbReference>
<dbReference type="PANTHER" id="PTHR30075">
    <property type="entry name" value="GLYCYL-TRNA SYNTHETASE"/>
    <property type="match status" value="1"/>
</dbReference>
<dbReference type="Pfam" id="PF02092">
    <property type="entry name" value="tRNA_synt_2f"/>
    <property type="match status" value="1"/>
</dbReference>
<dbReference type="PRINTS" id="PR01045">
    <property type="entry name" value="TRNASYNTHGB"/>
</dbReference>
<dbReference type="PROSITE" id="PS50861">
    <property type="entry name" value="AA_TRNA_LIGASE_II_GLYAB"/>
    <property type="match status" value="1"/>
</dbReference>
<reference key="1">
    <citation type="journal article" date="2009" name="J. Bacteriol.">
        <title>The complete genome sequence of Helicobacter pylori strain G27.</title>
        <authorList>
            <person name="Baltrus D.A."/>
            <person name="Amieva M.R."/>
            <person name="Covacci A."/>
            <person name="Lowe T.M."/>
            <person name="Merrell D.S."/>
            <person name="Ottemann K.M."/>
            <person name="Stein M."/>
            <person name="Salama N.R."/>
            <person name="Guillemin K."/>
        </authorList>
    </citation>
    <scope>NUCLEOTIDE SEQUENCE [LARGE SCALE GENOMIC DNA]</scope>
    <source>
        <strain>G27</strain>
    </source>
</reference>
<protein>
    <recommendedName>
        <fullName evidence="1">Glycine--tRNA ligase beta subunit</fullName>
        <ecNumber evidence="1">6.1.1.14</ecNumber>
    </recommendedName>
    <alternativeName>
        <fullName evidence="1">Glycyl-tRNA synthetase beta subunit</fullName>
        <shortName evidence="1">GlyRS</shortName>
    </alternativeName>
</protein>
<sequence>MHSDELLVEILVEELPAQALLNEYKEMPKKLHALFNKRALEVGNIEIFYTPRRLCLLIKDFPLLTQETKEEFFGPPVKIACNNEDKTQGLNALGLGFYQKLGLKDHQHFQTAFKNNKEVLYHAKIHEKEPTKDLIMPIVLEFLEDLNFGKSMRWGNVEKSFIRPIHNICVLFNGENFNDIEVKEYGFKTKQATKVHRQESFDFIEVDSPKAYFEVLEKNHVILDPKKREAKILQEIKELETEHHISIEIDRDLLDEVVAITEYPSALLGEFDKAFLKLPSEIITTSMKENQRYFATFCQKSQEESPTLHNGFIVVSNAINKDKQKIILGNQKVLKARLSDAVFFYENDLKKPLDNAPLESVVFVQGLGTLKDKMERESIIAQYLTQKYAPSLNMPLEKALELVKRAVQIAKADLLSEVVYEFSELQGIMGYYYALKQNENELVALSLKEQYLPASENAPLPSSVFSAIVALSLKLDSLFSLFSVGKIPSGSKDPFALRRLSFGLLKIIAHYGLEFDLKADLKSLFEKVGVYQSFDLEILEKFLLERFNNLIDCNPSIIRSVLNTNERDIVKIIQKVKALKRFLDDPKNAQKKELLFSAFKRLANINKDRNPNESSEFSISLFKESQEHALFEAFNAIKTSAFEGLDSKIEAYFGLHAPLEEYFKSVLVMDKDIEIQKNRKNFLWSVYQSFLEIGDIKEIAI</sequence>
<proteinExistence type="inferred from homology"/>
<keyword id="KW-0030">Aminoacyl-tRNA synthetase</keyword>
<keyword id="KW-0067">ATP-binding</keyword>
<keyword id="KW-0963">Cytoplasm</keyword>
<keyword id="KW-0436">Ligase</keyword>
<keyword id="KW-0547">Nucleotide-binding</keyword>
<keyword id="KW-0648">Protein biosynthesis</keyword>
<keyword id="KW-1185">Reference proteome</keyword>
<accession>B5Z7X4</accession>
<evidence type="ECO:0000255" key="1">
    <source>
        <dbReference type="HAMAP-Rule" id="MF_00255"/>
    </source>
</evidence>
<gene>
    <name evidence="1" type="primary">glyS</name>
    <name type="ordered locus">HPG27_919</name>
</gene>
<name>SYGB_HELPG</name>
<organism>
    <name type="scientific">Helicobacter pylori (strain G27)</name>
    <dbReference type="NCBI Taxonomy" id="563041"/>
    <lineage>
        <taxon>Bacteria</taxon>
        <taxon>Pseudomonadati</taxon>
        <taxon>Campylobacterota</taxon>
        <taxon>Epsilonproteobacteria</taxon>
        <taxon>Campylobacterales</taxon>
        <taxon>Helicobacteraceae</taxon>
        <taxon>Helicobacter</taxon>
    </lineage>
</organism>